<feature type="signal peptide" evidence="2">
    <location>
        <begin position="1"/>
        <end position="18"/>
    </location>
</feature>
<feature type="peptide" id="PRO_0000016031" description="Bombyxin D-1 B chain">
    <location>
        <begin position="19"/>
        <end position="45"/>
    </location>
</feature>
<feature type="propeptide" id="PRO_0000016032" description="C peptide like">
    <location>
        <begin position="48"/>
        <end position="68"/>
    </location>
</feature>
<feature type="peptide" id="PRO_0000016033" description="Bombyxin D-1 A chain">
    <location>
        <begin position="71"/>
        <end position="90"/>
    </location>
</feature>
<feature type="disulfide bond" description="Interchain (between B and A chains)" evidence="1">
    <location>
        <begin position="27"/>
        <end position="77"/>
    </location>
</feature>
<feature type="disulfide bond" description="Interchain (between B and A chains)" evidence="1">
    <location>
        <begin position="39"/>
        <end position="90"/>
    </location>
</feature>
<feature type="disulfide bond" evidence="1">
    <location>
        <begin position="76"/>
        <end position="81"/>
    </location>
</feature>
<feature type="sequence variant" description="In strain: Kinshu.">
    <original>G</original>
    <variation>R</variation>
    <location>
        <position position="23"/>
    </location>
</feature>
<protein>
    <recommendedName>
        <fullName>Bombyxin D-1</fullName>
        <shortName>BBX-D1</shortName>
    </recommendedName>
    <alternativeName>
        <fullName>4K-prothoracicotropic hormone</fullName>
        <shortName>4K-PTTH</shortName>
    </alternativeName>
    <component>
        <recommendedName>
            <fullName>Bombyxin D-1 B chain</fullName>
        </recommendedName>
    </component>
    <component>
        <recommendedName>
            <fullName>Bombyxin D-1 A chain</fullName>
        </recommendedName>
    </component>
</protein>
<dbReference type="EMBL" id="D00797">
    <property type="protein sequence ID" value="BAA00689.1"/>
    <property type="molecule type" value="Genomic_DNA"/>
</dbReference>
<dbReference type="EMBL" id="AB003905">
    <property type="protein sequence ID" value="BAA20145.1"/>
    <property type="molecule type" value="Genomic_DNA"/>
</dbReference>
<dbReference type="PIR" id="JQ0840">
    <property type="entry name" value="JQ0840"/>
</dbReference>
<dbReference type="RefSeq" id="NP_001121635.1">
    <property type="nucleotide sequence ID" value="NM_001128163.1"/>
</dbReference>
<dbReference type="FunCoup" id="P26736">
    <property type="interactions" value="162"/>
</dbReference>
<dbReference type="PaxDb" id="7091-BGIBMGA011926-TA"/>
<dbReference type="EnsemblMetazoa" id="NM_001128163.1">
    <property type="protein sequence ID" value="NP_001121635.1"/>
    <property type="gene ID" value="GeneID_100169725"/>
</dbReference>
<dbReference type="GeneID" id="100169725"/>
<dbReference type="KEGG" id="bmor:100169725"/>
<dbReference type="CTD" id="100169725"/>
<dbReference type="eggNOG" id="ENOG502SESX">
    <property type="taxonomic scope" value="Eukaryota"/>
</dbReference>
<dbReference type="HOGENOM" id="CLU_3016098_0_0_1"/>
<dbReference type="InParanoid" id="P26736"/>
<dbReference type="OrthoDB" id="493443at7088"/>
<dbReference type="Proteomes" id="UP000005204">
    <property type="component" value="Unassembled WGS sequence"/>
</dbReference>
<dbReference type="GO" id="GO:0005615">
    <property type="term" value="C:extracellular space"/>
    <property type="evidence" value="ECO:0007669"/>
    <property type="project" value="InterPro"/>
</dbReference>
<dbReference type="GO" id="GO:0008083">
    <property type="term" value="F:growth factor activity"/>
    <property type="evidence" value="ECO:0007669"/>
    <property type="project" value="InterPro"/>
</dbReference>
<dbReference type="GO" id="GO:0005179">
    <property type="term" value="F:hormone activity"/>
    <property type="evidence" value="ECO:0007669"/>
    <property type="project" value="UniProtKB-KW"/>
</dbReference>
<dbReference type="CDD" id="cd04366">
    <property type="entry name" value="IlGF_insulin_bombyxin_like"/>
    <property type="match status" value="1"/>
</dbReference>
<dbReference type="Gene3D" id="1.10.100.10">
    <property type="entry name" value="Insulin-like"/>
    <property type="match status" value="1"/>
</dbReference>
<dbReference type="InterPro" id="IPR017097">
    <property type="entry name" value="Bombyxin"/>
</dbReference>
<dbReference type="InterPro" id="IPR016179">
    <property type="entry name" value="Insulin-like"/>
</dbReference>
<dbReference type="InterPro" id="IPR036438">
    <property type="entry name" value="Insulin-like_sf"/>
</dbReference>
<dbReference type="InterPro" id="IPR022353">
    <property type="entry name" value="Insulin_CS"/>
</dbReference>
<dbReference type="Pfam" id="PF00049">
    <property type="entry name" value="Insulin"/>
    <property type="match status" value="1"/>
</dbReference>
<dbReference type="PIRSF" id="PIRSF037038">
    <property type="entry name" value="Bombyxin"/>
    <property type="match status" value="1"/>
</dbReference>
<dbReference type="PRINTS" id="PR02003">
    <property type="entry name" value="BOMBYXIN"/>
</dbReference>
<dbReference type="SMART" id="SM00078">
    <property type="entry name" value="IlGF"/>
    <property type="match status" value="1"/>
</dbReference>
<dbReference type="SUPFAM" id="SSF56994">
    <property type="entry name" value="Insulin-like"/>
    <property type="match status" value="1"/>
</dbReference>
<dbReference type="PROSITE" id="PS00262">
    <property type="entry name" value="INSULIN"/>
    <property type="match status" value="1"/>
</dbReference>
<name>BXD1_BOMMO</name>
<keyword id="KW-0165">Cleavage on pair of basic residues</keyword>
<keyword id="KW-1015">Disulfide bond</keyword>
<keyword id="KW-0372">Hormone</keyword>
<keyword id="KW-1185">Reference proteome</keyword>
<keyword id="KW-0964">Secreted</keyword>
<keyword id="KW-0732">Signal</keyword>
<reference key="1">
    <citation type="journal article" date="1996" name="J. Mol. Biol.">
        <title>Multiple gene copies for bombyxin, an insulin-related peptide of the silkmoth Bombyx mori: structural signs for gene rearrangement and duplication responsible for generation of multiple molecular forms of bombyxin.</title>
        <authorList>
            <person name="Kondo H."/>
            <person name="Ino M."/>
            <person name="Suzuki A."/>
            <person name="Ishizaki H."/>
            <person name="Iwami M."/>
        </authorList>
    </citation>
    <scope>NUCLEOTIDE SEQUENCE [GENOMIC DNA]</scope>
    <source>
        <strain>Kinshu</strain>
        <strain>Showa</strain>
    </source>
</reference>
<gene>
    <name type="primary">BBXD1</name>
</gene>
<sequence length="90" mass="10106">MKLLGFFLSWVSVCAIVSASEEGHIYCGRYLAYKMADLCWRAGFEKRSVAHYAGYGWPLLPSLSEERGKRGIADECCLQPCTNDVLLSYC</sequence>
<organism>
    <name type="scientific">Bombyx mori</name>
    <name type="common">Silk moth</name>
    <dbReference type="NCBI Taxonomy" id="7091"/>
    <lineage>
        <taxon>Eukaryota</taxon>
        <taxon>Metazoa</taxon>
        <taxon>Ecdysozoa</taxon>
        <taxon>Arthropoda</taxon>
        <taxon>Hexapoda</taxon>
        <taxon>Insecta</taxon>
        <taxon>Pterygota</taxon>
        <taxon>Neoptera</taxon>
        <taxon>Endopterygota</taxon>
        <taxon>Lepidoptera</taxon>
        <taxon>Glossata</taxon>
        <taxon>Ditrysia</taxon>
        <taxon>Bombycoidea</taxon>
        <taxon>Bombycidae</taxon>
        <taxon>Bombycinae</taxon>
        <taxon>Bombyx</taxon>
    </lineage>
</organism>
<accession>P26736</accession>
<accession>O01954</accession>
<proteinExistence type="inferred from homology"/>
<evidence type="ECO:0000250" key="1"/>
<evidence type="ECO:0000255" key="2"/>
<evidence type="ECO:0000305" key="3"/>
<comment type="function">
    <text>Brain peptide responsible for activation of prothoracic glands to produce ecdysone in insects.</text>
</comment>
<comment type="subunit">
    <text>Heterodimer of a B chain and an A chain linked by two disulfide bonds.</text>
</comment>
<comment type="subcellular location">
    <subcellularLocation>
        <location>Secreted</location>
    </subcellularLocation>
</comment>
<comment type="miscellaneous">
    <text>Silk worm has two kinds of PTTH: 4K-PTTH and 22K-PTTH; there are many forms of 4K-PTTH.</text>
</comment>
<comment type="similarity">
    <text evidence="3">Belongs to the insulin family.</text>
</comment>